<gene>
    <name evidence="1" type="primary">nanA</name>
    <name type="ordered locus">SAHV_0312</name>
</gene>
<accession>A7WXZ2</accession>
<reference key="1">
    <citation type="journal article" date="2008" name="Antimicrob. Agents Chemother.">
        <title>Mutated response regulator graR is responsible for phenotypic conversion of Staphylococcus aureus from heterogeneous vancomycin-intermediate resistance to vancomycin-intermediate resistance.</title>
        <authorList>
            <person name="Neoh H.-M."/>
            <person name="Cui L."/>
            <person name="Yuzawa H."/>
            <person name="Takeuchi F."/>
            <person name="Matsuo M."/>
            <person name="Hiramatsu K."/>
        </authorList>
    </citation>
    <scope>NUCLEOTIDE SEQUENCE [LARGE SCALE GENOMIC DNA]</scope>
    <source>
        <strain>Mu3 / ATCC 700698</strain>
    </source>
</reference>
<comment type="function">
    <text evidence="1">Catalyzes the reversible aldol cleavage of N-acetylneuraminic acid (sialic acid; Neu5Ac) to form pyruvate and N-acetylmannosamine (ManNAc) via a Schiff base intermediate.</text>
</comment>
<comment type="catalytic activity">
    <reaction evidence="1">
        <text>aceneuramate = aldehydo-N-acetyl-D-mannosamine + pyruvate</text>
        <dbReference type="Rhea" id="RHEA:23296"/>
        <dbReference type="ChEBI" id="CHEBI:15361"/>
        <dbReference type="ChEBI" id="CHEBI:17122"/>
        <dbReference type="ChEBI" id="CHEBI:173083"/>
        <dbReference type="EC" id="4.1.3.3"/>
    </reaction>
</comment>
<comment type="pathway">
    <text evidence="1">Amino-sugar metabolism; N-acetylneuraminate degradation; D-fructose 6-phosphate from N-acetylneuraminate: step 1/5.</text>
</comment>
<comment type="subunit">
    <text evidence="1">Homotetramer.</text>
</comment>
<comment type="subcellular location">
    <subcellularLocation>
        <location evidence="1">Cytoplasm</location>
    </subcellularLocation>
</comment>
<comment type="similarity">
    <text evidence="1">Belongs to the DapA family. NanA subfamily.</text>
</comment>
<name>NANA_STAA1</name>
<sequence length="293" mass="33101">MNKDLKGLYAALLVPFDENGQVNEQGLKQIAQNAIETEELDGLYVNGSSGENFLLNTEQKKQVFKVAKEAVGDKVKLIAQVGSLDLNEAIELGKYATELGYDALSAVTPFYYPFTFEEIRDYYFDIIEATQNNMIIYAIPDLTGVNISIEQFSELFNHEKIVGVKYTAPNFFLLERIRKAFPDKLILSGFDEMLVQATISGVDGAIGSTYNVNGRRARKIFDLARQGQIQEAYQLQHDSNDIIETVLSMGIYPTLKEILRHRDIDAGLPKRPFKPFNEAHRQTLDQLIAKYDL</sequence>
<feature type="chain" id="PRO_1000066936" description="N-acetylneuraminate lyase">
    <location>
        <begin position="1"/>
        <end position="293"/>
    </location>
</feature>
<feature type="active site" description="Proton donor" evidence="1">
    <location>
        <position position="137"/>
    </location>
</feature>
<feature type="active site" description="Schiff-base intermediate with substrate" evidence="1">
    <location>
        <position position="165"/>
    </location>
</feature>
<feature type="binding site" evidence="1">
    <location>
        <position position="48"/>
    </location>
    <ligand>
        <name>aceneuramate</name>
        <dbReference type="ChEBI" id="CHEBI:173083"/>
    </ligand>
</feature>
<feature type="binding site" evidence="1">
    <location>
        <position position="49"/>
    </location>
    <ligand>
        <name>aceneuramate</name>
        <dbReference type="ChEBI" id="CHEBI:173083"/>
    </ligand>
</feature>
<feature type="binding site" evidence="1">
    <location>
        <position position="167"/>
    </location>
    <ligand>
        <name>aceneuramate</name>
        <dbReference type="ChEBI" id="CHEBI:173083"/>
    </ligand>
</feature>
<feature type="binding site" evidence="1">
    <location>
        <position position="189"/>
    </location>
    <ligand>
        <name>aceneuramate</name>
        <dbReference type="ChEBI" id="CHEBI:173083"/>
    </ligand>
</feature>
<feature type="binding site" evidence="1">
    <location>
        <position position="191"/>
    </location>
    <ligand>
        <name>aceneuramate</name>
        <dbReference type="ChEBI" id="CHEBI:173083"/>
    </ligand>
</feature>
<feature type="binding site" evidence="1">
    <location>
        <position position="192"/>
    </location>
    <ligand>
        <name>aceneuramate</name>
        <dbReference type="ChEBI" id="CHEBI:173083"/>
    </ligand>
</feature>
<feature type="binding site" evidence="1">
    <location>
        <position position="208"/>
    </location>
    <ligand>
        <name>aceneuramate</name>
        <dbReference type="ChEBI" id="CHEBI:173083"/>
    </ligand>
</feature>
<evidence type="ECO:0000255" key="1">
    <source>
        <dbReference type="HAMAP-Rule" id="MF_01237"/>
    </source>
</evidence>
<organism>
    <name type="scientific">Staphylococcus aureus (strain Mu3 / ATCC 700698)</name>
    <dbReference type="NCBI Taxonomy" id="418127"/>
    <lineage>
        <taxon>Bacteria</taxon>
        <taxon>Bacillati</taxon>
        <taxon>Bacillota</taxon>
        <taxon>Bacilli</taxon>
        <taxon>Bacillales</taxon>
        <taxon>Staphylococcaceae</taxon>
        <taxon>Staphylococcus</taxon>
    </lineage>
</organism>
<dbReference type="EC" id="4.1.3.3" evidence="1"/>
<dbReference type="EMBL" id="AP009324">
    <property type="protein sequence ID" value="BAF77195.1"/>
    <property type="molecule type" value="Genomic_DNA"/>
</dbReference>
<dbReference type="RefSeq" id="WP_001030736.1">
    <property type="nucleotide sequence ID" value="NC_009782.1"/>
</dbReference>
<dbReference type="SMR" id="A7WXZ2"/>
<dbReference type="KEGG" id="saw:SAHV_0312"/>
<dbReference type="HOGENOM" id="CLU_049343_5_1_9"/>
<dbReference type="UniPathway" id="UPA00629">
    <property type="reaction ID" value="UER00680"/>
</dbReference>
<dbReference type="GO" id="GO:0005829">
    <property type="term" value="C:cytosol"/>
    <property type="evidence" value="ECO:0007669"/>
    <property type="project" value="TreeGrafter"/>
</dbReference>
<dbReference type="GO" id="GO:0008747">
    <property type="term" value="F:N-acetylneuraminate lyase activity"/>
    <property type="evidence" value="ECO:0007669"/>
    <property type="project" value="UniProtKB-UniRule"/>
</dbReference>
<dbReference type="GO" id="GO:0005975">
    <property type="term" value="P:carbohydrate metabolic process"/>
    <property type="evidence" value="ECO:0007669"/>
    <property type="project" value="UniProtKB-UniRule"/>
</dbReference>
<dbReference type="GO" id="GO:0019262">
    <property type="term" value="P:N-acetylneuraminate catabolic process"/>
    <property type="evidence" value="ECO:0007669"/>
    <property type="project" value="UniProtKB-UniRule"/>
</dbReference>
<dbReference type="CDD" id="cd00954">
    <property type="entry name" value="NAL"/>
    <property type="match status" value="1"/>
</dbReference>
<dbReference type="FunFam" id="3.20.20.70:FF:000039">
    <property type="entry name" value="N-acetylneuraminate lyase"/>
    <property type="match status" value="1"/>
</dbReference>
<dbReference type="Gene3D" id="3.20.20.70">
    <property type="entry name" value="Aldolase class I"/>
    <property type="match status" value="1"/>
</dbReference>
<dbReference type="HAMAP" id="MF_01237">
    <property type="entry name" value="N_acetylneuram_lyase"/>
    <property type="match status" value="1"/>
</dbReference>
<dbReference type="InterPro" id="IPR013785">
    <property type="entry name" value="Aldolase_TIM"/>
</dbReference>
<dbReference type="InterPro" id="IPR002220">
    <property type="entry name" value="DapA-like"/>
</dbReference>
<dbReference type="InterPro" id="IPR005264">
    <property type="entry name" value="NanA"/>
</dbReference>
<dbReference type="InterPro" id="IPR020625">
    <property type="entry name" value="Schiff_base-form_aldolases_AS"/>
</dbReference>
<dbReference type="NCBIfam" id="NF003164">
    <property type="entry name" value="PRK04147.1"/>
    <property type="match status" value="1"/>
</dbReference>
<dbReference type="PANTHER" id="PTHR42849">
    <property type="entry name" value="N-ACETYLNEURAMINATE LYASE"/>
    <property type="match status" value="1"/>
</dbReference>
<dbReference type="PANTHER" id="PTHR42849:SF1">
    <property type="entry name" value="N-ACETYLNEURAMINATE LYASE"/>
    <property type="match status" value="1"/>
</dbReference>
<dbReference type="Pfam" id="PF00701">
    <property type="entry name" value="DHDPS"/>
    <property type="match status" value="1"/>
</dbReference>
<dbReference type="PIRSF" id="PIRSF001365">
    <property type="entry name" value="DHDPS"/>
    <property type="match status" value="1"/>
</dbReference>
<dbReference type="PRINTS" id="PR00146">
    <property type="entry name" value="DHPICSNTHASE"/>
</dbReference>
<dbReference type="SMART" id="SM01130">
    <property type="entry name" value="DHDPS"/>
    <property type="match status" value="1"/>
</dbReference>
<dbReference type="SUPFAM" id="SSF51569">
    <property type="entry name" value="Aldolase"/>
    <property type="match status" value="1"/>
</dbReference>
<dbReference type="PROSITE" id="PS00666">
    <property type="entry name" value="DHDPS_2"/>
    <property type="match status" value="1"/>
</dbReference>
<proteinExistence type="inferred from homology"/>
<keyword id="KW-0119">Carbohydrate metabolism</keyword>
<keyword id="KW-0963">Cytoplasm</keyword>
<keyword id="KW-0456">Lyase</keyword>
<keyword id="KW-0704">Schiff base</keyword>
<protein>
    <recommendedName>
        <fullName evidence="1">N-acetylneuraminate lyase</fullName>
        <shortName evidence="1">NAL</shortName>
        <shortName evidence="1">Neu5Ac lyase</shortName>
        <ecNumber evidence="1">4.1.3.3</ecNumber>
    </recommendedName>
    <alternativeName>
        <fullName evidence="1">N-acetylneuraminate pyruvate-lyase</fullName>
    </alternativeName>
    <alternativeName>
        <fullName evidence="1">N-acetylneuraminic acid aldolase</fullName>
    </alternativeName>
    <alternativeName>
        <fullName evidence="1">Sialate lyase</fullName>
    </alternativeName>
    <alternativeName>
        <fullName evidence="1">Sialic acid aldolase</fullName>
    </alternativeName>
    <alternativeName>
        <fullName evidence="1">Sialic acid lyase</fullName>
    </alternativeName>
</protein>